<reference key="1">
    <citation type="submission" date="1987-08" db="EMBL/GenBank/DDBJ databases">
        <authorList>
            <person name="Eriksson A."/>
        </authorList>
    </citation>
    <scope>NUCLEOTIDE SEQUENCE [GENOMIC DNA]</scope>
</reference>
<keyword id="KW-0167">Capsid protein</keyword>
<keyword id="KW-1176">Cytoplasmic inwards viral transport</keyword>
<keyword id="KW-1015">Disulfide bond</keyword>
<keyword id="KW-0238">DNA-binding</keyword>
<keyword id="KW-1039">Host endosome</keyword>
<keyword id="KW-1040">Host Golgi apparatus</keyword>
<keyword id="KW-1048">Host nucleus</keyword>
<keyword id="KW-0945">Host-virus interaction</keyword>
<keyword id="KW-0426">Late protein</keyword>
<keyword id="KW-1177">Microtubular inwards viral transport</keyword>
<keyword id="KW-0597">Phosphoprotein</keyword>
<keyword id="KW-1185">Reference proteome</keyword>
<keyword id="KW-1163">Viral penetration into host nucleus</keyword>
<keyword id="KW-0946">Virion</keyword>
<keyword id="KW-1160">Virus entry into host cell</keyword>
<feature type="chain" id="PRO_0000133638" description="Minor capsid protein L2">
    <location>
        <begin position="1"/>
        <end position="477"/>
    </location>
</feature>
<feature type="short sequence motif" description="Nuclear localization signal" evidence="1">
    <location>
        <begin position="1"/>
        <end position="9"/>
    </location>
</feature>
<feature type="short sequence motif" description="Nuclear localization signal" evidence="1">
    <location>
        <begin position="469"/>
        <end position="476"/>
    </location>
</feature>
<feature type="disulfide bond" evidence="1">
    <location>
        <begin position="18"/>
        <end position="24"/>
    </location>
</feature>
<organismHost>
    <name type="scientific">Cervus elaphus</name>
    <name type="common">Red deer</name>
    <dbReference type="NCBI Taxonomy" id="9860"/>
</organismHost>
<organismHost>
    <name type="scientific">Rangifer tarandus</name>
    <name type="common">Reindeer</name>
    <name type="synonym">Cervus tarandus</name>
    <dbReference type="NCBI Taxonomy" id="9870"/>
</organismHost>
<sequence>MAPRRVKRANVYDLYRTCKQAGTCPPDVIPKVEGKTIADKILQYGSMGVYLGGLGIGTGSGKPGTGGYIPLRGGGSTTSLSSKPFAGGIPLETLEGIGAFRPGIVEDAGPALEGILPDAPAVVTPEAVPVDEGLSGLDISRELSQEQILSFLHPEGPDDIAVLEVRPTEHDQAHLLSTSTHPNPLFQGPVQQARIIAETSGAENVFVGGSGIGSNAGEDIELTLFAEPRTSTPEVPIKRSRGIFNWFSRRYYTQVPVEDPDEIAAAGSYVFENPVYDSKAFKPAQQPDITLQDEASVTGRDAARLLAGPSGRIGWSRITRPTSLGTRSGVRVGPLYHLRSSFSTIHSPETIELIPTVLEDDTEVLTGVPERDTGFDDVDLDSIASDSPLLPERHHLAFGARRSHIPIVARPGVQTGTVIDTRQMAENSVYVSDNGGQESQQTPTVVINGNINVSMEYFRHYYLHPSLLGRKRKRLFG</sequence>
<gene>
    <name evidence="1" type="primary">L2</name>
</gene>
<comment type="function">
    <text evidence="1">Minor protein of the capsid that localizes along the inner surface of the virion, within the central cavities beneath the L1 pentamers. Plays a role in capsid stabilization through interaction with the major capsid protein L1. Once the virion enters the host cell, L2 escorts the genomic DNA into the nucleus by promoting escape from the endosomal compartments and traffic through the host Golgi network. Mechanistically, the C-terminus of L2 possesses a cell-penetrating peptide that protudes from the host endosome, interacts with host cytoplasmic retromer cargo and thereby mediates the capsid delivery to the host trans-Golgi network. Plays a role through its interaction with host dynein in the intracellular microtubule-dependent transport of viral capsid toward the nucleus. Mediates the viral genome import into the nucleus through binding to host importins. Once within the nucleus, L2 localizes viral genomes to host PML bodies in order to activate early gene expression for establishment of infection. Later on, promotes late gene expression by interacting with the viral E2 protein and by inhibiting its transcriptional activation functions. During virion assembly, encapsidates the genome by direct interaction with the viral DNA.</text>
</comment>
<comment type="subunit">
    <text evidence="1">Interacts with major capsid protein L1. Interacts with E2; this interaction inhibits E2 transcriptional activity but not the DNA replication function E2. Interacts with host GADD45GIP1. Interacts with host HSPA8; this interaction is required for L2 nuclear translocation. Interacts with host importins KPNB2 and KPNB3. Forms a complex with importin alpha2-beta1 heterodimers via interaction with the importin alpha2 adapter. Interacts with host DYNLT1; this interaction is essential for virus intracellular transport during entry. Interacts (via C-terminus) with host retromer subunits VPS35 and VPS29.</text>
</comment>
<comment type="subcellular location">
    <subcellularLocation>
        <location evidence="1">Virion</location>
    </subcellularLocation>
    <subcellularLocation>
        <location evidence="1">Host nucleus</location>
    </subcellularLocation>
    <subcellularLocation>
        <location evidence="1">Host early endosome</location>
    </subcellularLocation>
    <subcellularLocation>
        <location evidence="1">Host Golgi apparatus</location>
    </subcellularLocation>
</comment>
<comment type="PTM">
    <text evidence="1">Highly phosphorylated.</text>
</comment>
<comment type="similarity">
    <text evidence="1">Belongs to the papillomaviridae L2 protein family.</text>
</comment>
<proteinExistence type="inferred from homology"/>
<protein>
    <recommendedName>
        <fullName evidence="1">Minor capsid protein L2</fullName>
    </recommendedName>
</protein>
<name>VL2_PAPVE</name>
<organism>
    <name type="scientific">European elk papillomavirus</name>
    <name type="common">EEPV</name>
    <dbReference type="NCBI Taxonomy" id="2885846"/>
    <lineage>
        <taxon>Viruses</taxon>
        <taxon>Monodnaviria</taxon>
        <taxon>Shotokuvirae</taxon>
        <taxon>Cossaviricota</taxon>
        <taxon>Papovaviricetes</taxon>
        <taxon>Zurhausenvirales</taxon>
        <taxon>Papillomaviridae</taxon>
        <taxon>Firstpapillomavirinae</taxon>
        <taxon>Deltapapillomavirus</taxon>
        <taxon>Deltapapillomavirus 1</taxon>
    </lineage>
</organism>
<dbReference type="EMBL" id="M15953">
    <property type="protein sequence ID" value="AAA66860.1"/>
    <property type="molecule type" value="Genomic_DNA"/>
</dbReference>
<dbReference type="PIR" id="B94457">
    <property type="entry name" value="P2WLEP"/>
</dbReference>
<dbReference type="RefSeq" id="NP_041312.1">
    <property type="nucleotide sequence ID" value="NC_001524.1"/>
</dbReference>
<dbReference type="GeneID" id="1488994"/>
<dbReference type="KEGG" id="vg:1488994"/>
<dbReference type="Proteomes" id="UP000009060">
    <property type="component" value="Genome"/>
</dbReference>
<dbReference type="GO" id="GO:0043657">
    <property type="term" value="C:host cell"/>
    <property type="evidence" value="ECO:0007669"/>
    <property type="project" value="GOC"/>
</dbReference>
<dbReference type="GO" id="GO:0044174">
    <property type="term" value="C:host cell endosome"/>
    <property type="evidence" value="ECO:0007669"/>
    <property type="project" value="UniProtKB-KW"/>
</dbReference>
<dbReference type="GO" id="GO:0044177">
    <property type="term" value="C:host cell Golgi apparatus"/>
    <property type="evidence" value="ECO:0007669"/>
    <property type="project" value="UniProtKB-SubCell"/>
</dbReference>
<dbReference type="GO" id="GO:0042025">
    <property type="term" value="C:host cell nucleus"/>
    <property type="evidence" value="ECO:0007669"/>
    <property type="project" value="UniProtKB-SubCell"/>
</dbReference>
<dbReference type="GO" id="GO:0019028">
    <property type="term" value="C:viral capsid"/>
    <property type="evidence" value="ECO:0007669"/>
    <property type="project" value="UniProtKB-UniRule"/>
</dbReference>
<dbReference type="GO" id="GO:0003677">
    <property type="term" value="F:DNA binding"/>
    <property type="evidence" value="ECO:0007669"/>
    <property type="project" value="UniProtKB-UniRule"/>
</dbReference>
<dbReference type="GO" id="GO:0005198">
    <property type="term" value="F:structural molecule activity"/>
    <property type="evidence" value="ECO:0007669"/>
    <property type="project" value="UniProtKB-UniRule"/>
</dbReference>
<dbReference type="GO" id="GO:0075521">
    <property type="term" value="P:microtubule-dependent intracellular transport of viral material towards nucleus"/>
    <property type="evidence" value="ECO:0007669"/>
    <property type="project" value="UniProtKB-UniRule"/>
</dbReference>
<dbReference type="GO" id="GO:0046718">
    <property type="term" value="P:symbiont entry into host cell"/>
    <property type="evidence" value="ECO:0007669"/>
    <property type="project" value="UniProtKB-KW"/>
</dbReference>
<dbReference type="GO" id="GO:0075732">
    <property type="term" value="P:viral penetration into host nucleus"/>
    <property type="evidence" value="ECO:0007669"/>
    <property type="project" value="UniProtKB-KW"/>
</dbReference>
<dbReference type="HAMAP" id="MF_04003">
    <property type="entry name" value="PPV_L2"/>
    <property type="match status" value="1"/>
</dbReference>
<dbReference type="InterPro" id="IPR000784">
    <property type="entry name" value="Late_L2"/>
</dbReference>
<dbReference type="Pfam" id="PF00513">
    <property type="entry name" value="Late_protein_L2"/>
    <property type="match status" value="1"/>
</dbReference>
<evidence type="ECO:0000255" key="1">
    <source>
        <dbReference type="HAMAP-Rule" id="MF_04003"/>
    </source>
</evidence>
<accession>P11327</accession>